<accession>B0SZ11</accession>
<proteinExistence type="inferred from homology"/>
<reference key="1">
    <citation type="submission" date="2008-01" db="EMBL/GenBank/DDBJ databases">
        <title>Complete sequence of chromosome of Caulobacter sp. K31.</title>
        <authorList>
            <consortium name="US DOE Joint Genome Institute"/>
            <person name="Copeland A."/>
            <person name="Lucas S."/>
            <person name="Lapidus A."/>
            <person name="Barry K."/>
            <person name="Glavina del Rio T."/>
            <person name="Dalin E."/>
            <person name="Tice H."/>
            <person name="Pitluck S."/>
            <person name="Bruce D."/>
            <person name="Goodwin L."/>
            <person name="Thompson L.S."/>
            <person name="Brettin T."/>
            <person name="Detter J.C."/>
            <person name="Han C."/>
            <person name="Schmutz J."/>
            <person name="Larimer F."/>
            <person name="Land M."/>
            <person name="Hauser L."/>
            <person name="Kyrpides N."/>
            <person name="Kim E."/>
            <person name="Stephens C."/>
            <person name="Richardson P."/>
        </authorList>
    </citation>
    <scope>NUCLEOTIDE SEQUENCE [LARGE SCALE GENOMIC DNA]</scope>
    <source>
        <strain>K31</strain>
    </source>
</reference>
<evidence type="ECO:0000255" key="1">
    <source>
        <dbReference type="HAMAP-Rule" id="MF_00523"/>
    </source>
</evidence>
<name>LPXD_CAUSK</name>
<keyword id="KW-0012">Acyltransferase</keyword>
<keyword id="KW-0441">Lipid A biosynthesis</keyword>
<keyword id="KW-0444">Lipid biosynthesis</keyword>
<keyword id="KW-0443">Lipid metabolism</keyword>
<keyword id="KW-0677">Repeat</keyword>
<keyword id="KW-0808">Transferase</keyword>
<protein>
    <recommendedName>
        <fullName evidence="1">UDP-3-O-acylglucosamine N-acyltransferase</fullName>
        <ecNumber evidence="1">2.3.1.191</ecNumber>
    </recommendedName>
</protein>
<sequence length="340" mass="34174">MPDPRFFEDLGPATLAELASLSGARLADPATGHQLVSHVAPLESAGPGAVTFLSDPKRLADLAGLSGAVCFLRPEHAADAPPGCALLLTNHPQASWAAAAHRLHASRRHDGAQPVHPDCELEEGVLLAPGVVIGQGARIGRGTQVGPGVVIGPGVAVGRDCRIGANAVIGFALVGDRVSIHAGAVIGEAGFGAAGGPTGVVDLPQLGRVVLQDGVTIGANSCVDRGAFGDTTIGENSKIDNLVHVAHNVRLGRNCVAAAFTGISGSTVVGDGVAFGGKAGVADHLTIGAGANIGAAASVFKSVPAGETWTGFPARPLKRWLRETAWLSRKAGGRGIKGPE</sequence>
<gene>
    <name evidence="1" type="primary">lpxD</name>
    <name type="ordered locus">Caul_2795</name>
</gene>
<comment type="function">
    <text evidence="1">Catalyzes the N-acylation of UDP-3-O-acylglucosamine using 3-hydroxyacyl-ACP as the acyl donor. Is involved in the biosynthesis of lipid A, a phosphorylated glycolipid that anchors the lipopolysaccharide to the outer membrane of the cell.</text>
</comment>
<comment type="catalytic activity">
    <reaction evidence="1">
        <text>a UDP-3-O-[(3R)-3-hydroxyacyl]-alpha-D-glucosamine + a (3R)-hydroxyacyl-[ACP] = a UDP-2-N,3-O-bis[(3R)-3-hydroxyacyl]-alpha-D-glucosamine + holo-[ACP] + H(+)</text>
        <dbReference type="Rhea" id="RHEA:53836"/>
        <dbReference type="Rhea" id="RHEA-COMP:9685"/>
        <dbReference type="Rhea" id="RHEA-COMP:9945"/>
        <dbReference type="ChEBI" id="CHEBI:15378"/>
        <dbReference type="ChEBI" id="CHEBI:64479"/>
        <dbReference type="ChEBI" id="CHEBI:78827"/>
        <dbReference type="ChEBI" id="CHEBI:137740"/>
        <dbReference type="ChEBI" id="CHEBI:137748"/>
        <dbReference type="EC" id="2.3.1.191"/>
    </reaction>
</comment>
<comment type="pathway">
    <text evidence="1">Bacterial outer membrane biogenesis; LPS lipid A biosynthesis.</text>
</comment>
<comment type="subunit">
    <text evidence="1">Homotrimer.</text>
</comment>
<comment type="similarity">
    <text evidence="1">Belongs to the transferase hexapeptide repeat family. LpxD subfamily.</text>
</comment>
<organism>
    <name type="scientific">Caulobacter sp. (strain K31)</name>
    <dbReference type="NCBI Taxonomy" id="366602"/>
    <lineage>
        <taxon>Bacteria</taxon>
        <taxon>Pseudomonadati</taxon>
        <taxon>Pseudomonadota</taxon>
        <taxon>Alphaproteobacteria</taxon>
        <taxon>Caulobacterales</taxon>
        <taxon>Caulobacteraceae</taxon>
        <taxon>Caulobacter</taxon>
    </lineage>
</organism>
<feature type="chain" id="PRO_1000081686" description="UDP-3-O-acylglucosamine N-acyltransferase">
    <location>
        <begin position="1"/>
        <end position="340"/>
    </location>
</feature>
<feature type="active site" description="Proton acceptor" evidence="1">
    <location>
        <position position="247"/>
    </location>
</feature>
<dbReference type="EC" id="2.3.1.191" evidence="1"/>
<dbReference type="EMBL" id="CP000927">
    <property type="protein sequence ID" value="ABZ71922.1"/>
    <property type="molecule type" value="Genomic_DNA"/>
</dbReference>
<dbReference type="SMR" id="B0SZ11"/>
<dbReference type="STRING" id="366602.Caul_2795"/>
<dbReference type="KEGG" id="cak:Caul_2795"/>
<dbReference type="eggNOG" id="COG1044">
    <property type="taxonomic scope" value="Bacteria"/>
</dbReference>
<dbReference type="HOGENOM" id="CLU_049865_0_2_5"/>
<dbReference type="OrthoDB" id="9784739at2"/>
<dbReference type="UniPathway" id="UPA00973"/>
<dbReference type="GO" id="GO:0016020">
    <property type="term" value="C:membrane"/>
    <property type="evidence" value="ECO:0007669"/>
    <property type="project" value="GOC"/>
</dbReference>
<dbReference type="GO" id="GO:0016410">
    <property type="term" value="F:N-acyltransferase activity"/>
    <property type="evidence" value="ECO:0007669"/>
    <property type="project" value="InterPro"/>
</dbReference>
<dbReference type="GO" id="GO:0009245">
    <property type="term" value="P:lipid A biosynthetic process"/>
    <property type="evidence" value="ECO:0007669"/>
    <property type="project" value="UniProtKB-UniRule"/>
</dbReference>
<dbReference type="CDD" id="cd03352">
    <property type="entry name" value="LbH_LpxD"/>
    <property type="match status" value="1"/>
</dbReference>
<dbReference type="Gene3D" id="2.160.10.10">
    <property type="entry name" value="Hexapeptide repeat proteins"/>
    <property type="match status" value="1"/>
</dbReference>
<dbReference type="Gene3D" id="3.40.1390.10">
    <property type="entry name" value="MurE/MurF, N-terminal domain"/>
    <property type="match status" value="1"/>
</dbReference>
<dbReference type="HAMAP" id="MF_00523">
    <property type="entry name" value="LpxD"/>
    <property type="match status" value="1"/>
</dbReference>
<dbReference type="InterPro" id="IPR001451">
    <property type="entry name" value="Hexapep"/>
</dbReference>
<dbReference type="InterPro" id="IPR018357">
    <property type="entry name" value="Hexapep_transf_CS"/>
</dbReference>
<dbReference type="InterPro" id="IPR007691">
    <property type="entry name" value="LpxD"/>
</dbReference>
<dbReference type="InterPro" id="IPR011004">
    <property type="entry name" value="Trimer_LpxA-like_sf"/>
</dbReference>
<dbReference type="InterPro" id="IPR020573">
    <property type="entry name" value="UDP_GlcNAc_AcTrfase_non-rep"/>
</dbReference>
<dbReference type="NCBIfam" id="TIGR01853">
    <property type="entry name" value="lipid_A_lpxD"/>
    <property type="match status" value="1"/>
</dbReference>
<dbReference type="NCBIfam" id="NF002060">
    <property type="entry name" value="PRK00892.1"/>
    <property type="match status" value="1"/>
</dbReference>
<dbReference type="PANTHER" id="PTHR43378">
    <property type="entry name" value="UDP-3-O-ACYLGLUCOSAMINE N-ACYLTRANSFERASE"/>
    <property type="match status" value="1"/>
</dbReference>
<dbReference type="PANTHER" id="PTHR43378:SF2">
    <property type="entry name" value="UDP-3-O-ACYLGLUCOSAMINE N-ACYLTRANSFERASE 1, MITOCHONDRIAL-RELATED"/>
    <property type="match status" value="1"/>
</dbReference>
<dbReference type="Pfam" id="PF00132">
    <property type="entry name" value="Hexapep"/>
    <property type="match status" value="2"/>
</dbReference>
<dbReference type="Pfam" id="PF04613">
    <property type="entry name" value="LpxD"/>
    <property type="match status" value="1"/>
</dbReference>
<dbReference type="SUPFAM" id="SSF51161">
    <property type="entry name" value="Trimeric LpxA-like enzymes"/>
    <property type="match status" value="1"/>
</dbReference>
<dbReference type="PROSITE" id="PS00101">
    <property type="entry name" value="HEXAPEP_TRANSFERASES"/>
    <property type="match status" value="2"/>
</dbReference>